<organism>
    <name type="scientific">Escherichia coli O6:H1 (strain CFT073 / ATCC 700928 / UPEC)</name>
    <dbReference type="NCBI Taxonomy" id="199310"/>
    <lineage>
        <taxon>Bacteria</taxon>
        <taxon>Pseudomonadati</taxon>
        <taxon>Pseudomonadota</taxon>
        <taxon>Gammaproteobacteria</taxon>
        <taxon>Enterobacterales</taxon>
        <taxon>Enterobacteriaceae</taxon>
        <taxon>Escherichia</taxon>
    </lineage>
</organism>
<proteinExistence type="inferred from homology"/>
<keyword id="KW-0004">4Fe-4S</keyword>
<keyword id="KW-0963">Cytoplasm</keyword>
<keyword id="KW-0408">Iron</keyword>
<keyword id="KW-0411">Iron-sulfur</keyword>
<keyword id="KW-0479">Metal-binding</keyword>
<keyword id="KW-1185">Reference proteome</keyword>
<keyword id="KW-0949">S-adenosyl-L-methionine</keyword>
<keyword id="KW-0808">Transferase</keyword>
<comment type="function">
    <text evidence="1">Catalyzes the radical-mediated insertion of two sulfur atoms into the C-6 and C-8 positions of the octanoyl moiety bound to the lipoyl domains of lipoate-dependent enzymes, thereby converting the octanoylated domains into lipoylated derivatives.</text>
</comment>
<comment type="catalytic activity">
    <reaction evidence="1">
        <text>[[Fe-S] cluster scaffold protein carrying a second [4Fe-4S](2+) cluster] + N(6)-octanoyl-L-lysyl-[protein] + 2 oxidized [2Fe-2S]-[ferredoxin] + 2 S-adenosyl-L-methionine + 4 H(+) = [[Fe-S] cluster scaffold protein] + N(6)-[(R)-dihydrolipoyl]-L-lysyl-[protein] + 4 Fe(3+) + 2 hydrogen sulfide + 2 5'-deoxyadenosine + 2 L-methionine + 2 reduced [2Fe-2S]-[ferredoxin]</text>
        <dbReference type="Rhea" id="RHEA:16585"/>
        <dbReference type="Rhea" id="RHEA-COMP:9928"/>
        <dbReference type="Rhea" id="RHEA-COMP:10000"/>
        <dbReference type="Rhea" id="RHEA-COMP:10001"/>
        <dbReference type="Rhea" id="RHEA-COMP:10475"/>
        <dbReference type="Rhea" id="RHEA-COMP:14568"/>
        <dbReference type="Rhea" id="RHEA-COMP:14569"/>
        <dbReference type="ChEBI" id="CHEBI:15378"/>
        <dbReference type="ChEBI" id="CHEBI:17319"/>
        <dbReference type="ChEBI" id="CHEBI:29034"/>
        <dbReference type="ChEBI" id="CHEBI:29919"/>
        <dbReference type="ChEBI" id="CHEBI:33722"/>
        <dbReference type="ChEBI" id="CHEBI:33737"/>
        <dbReference type="ChEBI" id="CHEBI:33738"/>
        <dbReference type="ChEBI" id="CHEBI:57844"/>
        <dbReference type="ChEBI" id="CHEBI:59789"/>
        <dbReference type="ChEBI" id="CHEBI:78809"/>
        <dbReference type="ChEBI" id="CHEBI:83100"/>
        <dbReference type="EC" id="2.8.1.8"/>
    </reaction>
</comment>
<comment type="cofactor">
    <cofactor evidence="1">
        <name>[4Fe-4S] cluster</name>
        <dbReference type="ChEBI" id="CHEBI:49883"/>
    </cofactor>
    <text evidence="1">Binds 2 [4Fe-4S] clusters per subunit. One cluster is coordinated with 3 cysteines and an exchangeable S-adenosyl-L-methionine.</text>
</comment>
<comment type="pathway">
    <text evidence="1">Protein modification; protein lipoylation via endogenous pathway; protein N(6)-(lipoyl)lysine from octanoyl-[acyl-carrier-protein]: step 2/2.</text>
</comment>
<comment type="subcellular location">
    <subcellularLocation>
        <location evidence="1">Cytoplasm</location>
    </subcellularLocation>
</comment>
<comment type="similarity">
    <text evidence="1">Belongs to the radical SAM superfamily. Lipoyl synthase family.</text>
</comment>
<name>LIPA_ECOL6</name>
<evidence type="ECO:0000255" key="1">
    <source>
        <dbReference type="HAMAP-Rule" id="MF_00206"/>
    </source>
</evidence>
<evidence type="ECO:0000255" key="2">
    <source>
        <dbReference type="PROSITE-ProRule" id="PRU01266"/>
    </source>
</evidence>
<feature type="chain" id="PRO_0000102314" description="Lipoyl synthase">
    <location>
        <begin position="1"/>
        <end position="321"/>
    </location>
</feature>
<feature type="domain" description="Radical SAM core" evidence="2">
    <location>
        <begin position="80"/>
        <end position="297"/>
    </location>
</feature>
<feature type="binding site" evidence="1">
    <location>
        <position position="68"/>
    </location>
    <ligand>
        <name>[4Fe-4S] cluster</name>
        <dbReference type="ChEBI" id="CHEBI:49883"/>
        <label>1</label>
    </ligand>
</feature>
<feature type="binding site" evidence="1">
    <location>
        <position position="73"/>
    </location>
    <ligand>
        <name>[4Fe-4S] cluster</name>
        <dbReference type="ChEBI" id="CHEBI:49883"/>
        <label>1</label>
    </ligand>
</feature>
<feature type="binding site" evidence="1">
    <location>
        <position position="79"/>
    </location>
    <ligand>
        <name>[4Fe-4S] cluster</name>
        <dbReference type="ChEBI" id="CHEBI:49883"/>
        <label>1</label>
    </ligand>
</feature>
<feature type="binding site" evidence="1">
    <location>
        <position position="94"/>
    </location>
    <ligand>
        <name>[4Fe-4S] cluster</name>
        <dbReference type="ChEBI" id="CHEBI:49883"/>
        <label>2</label>
        <note>4Fe-4S-S-AdoMet</note>
    </ligand>
</feature>
<feature type="binding site" evidence="1">
    <location>
        <position position="98"/>
    </location>
    <ligand>
        <name>[4Fe-4S] cluster</name>
        <dbReference type="ChEBI" id="CHEBI:49883"/>
        <label>2</label>
        <note>4Fe-4S-S-AdoMet</note>
    </ligand>
</feature>
<feature type="binding site" evidence="1">
    <location>
        <position position="101"/>
    </location>
    <ligand>
        <name>[4Fe-4S] cluster</name>
        <dbReference type="ChEBI" id="CHEBI:49883"/>
        <label>2</label>
        <note>4Fe-4S-S-AdoMet</note>
    </ligand>
</feature>
<feature type="binding site" evidence="1">
    <location>
        <position position="308"/>
    </location>
    <ligand>
        <name>[4Fe-4S] cluster</name>
        <dbReference type="ChEBI" id="CHEBI:49883"/>
        <label>1</label>
    </ligand>
</feature>
<accession>P60717</accession>
<accession>P25845</accession>
<accession>P77595</accession>
<gene>
    <name evidence="1" type="primary">lipA</name>
    <name type="ordered locus">c0718</name>
</gene>
<dbReference type="EC" id="2.8.1.8" evidence="1"/>
<dbReference type="EMBL" id="AE014075">
    <property type="protein sequence ID" value="AAN79191.1"/>
    <property type="molecule type" value="Genomic_DNA"/>
</dbReference>
<dbReference type="RefSeq" id="WP_000042632.1">
    <property type="nucleotide sequence ID" value="NZ_CP051263.1"/>
</dbReference>
<dbReference type="SMR" id="P60717"/>
<dbReference type="STRING" id="199310.c0718"/>
<dbReference type="GeneID" id="93776854"/>
<dbReference type="KEGG" id="ecc:c0718"/>
<dbReference type="eggNOG" id="COG0320">
    <property type="taxonomic scope" value="Bacteria"/>
</dbReference>
<dbReference type="HOGENOM" id="CLU_033144_2_1_6"/>
<dbReference type="BioCyc" id="ECOL199310:C0718-MONOMER"/>
<dbReference type="UniPathway" id="UPA00538">
    <property type="reaction ID" value="UER00593"/>
</dbReference>
<dbReference type="Proteomes" id="UP000001410">
    <property type="component" value="Chromosome"/>
</dbReference>
<dbReference type="GO" id="GO:0005737">
    <property type="term" value="C:cytoplasm"/>
    <property type="evidence" value="ECO:0007669"/>
    <property type="project" value="UniProtKB-SubCell"/>
</dbReference>
<dbReference type="GO" id="GO:0051539">
    <property type="term" value="F:4 iron, 4 sulfur cluster binding"/>
    <property type="evidence" value="ECO:0007669"/>
    <property type="project" value="UniProtKB-UniRule"/>
</dbReference>
<dbReference type="GO" id="GO:0016992">
    <property type="term" value="F:lipoate synthase activity"/>
    <property type="evidence" value="ECO:0007669"/>
    <property type="project" value="UniProtKB-UniRule"/>
</dbReference>
<dbReference type="GO" id="GO:0046872">
    <property type="term" value="F:metal ion binding"/>
    <property type="evidence" value="ECO:0007669"/>
    <property type="project" value="UniProtKB-KW"/>
</dbReference>
<dbReference type="CDD" id="cd01335">
    <property type="entry name" value="Radical_SAM"/>
    <property type="match status" value="1"/>
</dbReference>
<dbReference type="FunFam" id="3.20.20.70:FF:000023">
    <property type="entry name" value="Lipoyl synthase"/>
    <property type="match status" value="1"/>
</dbReference>
<dbReference type="Gene3D" id="3.20.20.70">
    <property type="entry name" value="Aldolase class I"/>
    <property type="match status" value="1"/>
</dbReference>
<dbReference type="HAMAP" id="MF_00206">
    <property type="entry name" value="Lipoyl_synth"/>
    <property type="match status" value="1"/>
</dbReference>
<dbReference type="InterPro" id="IPR013785">
    <property type="entry name" value="Aldolase_TIM"/>
</dbReference>
<dbReference type="InterPro" id="IPR006638">
    <property type="entry name" value="Elp3/MiaA/NifB-like_rSAM"/>
</dbReference>
<dbReference type="InterPro" id="IPR031691">
    <property type="entry name" value="LIAS_N"/>
</dbReference>
<dbReference type="InterPro" id="IPR003698">
    <property type="entry name" value="Lipoyl_synth"/>
</dbReference>
<dbReference type="InterPro" id="IPR007197">
    <property type="entry name" value="rSAM"/>
</dbReference>
<dbReference type="NCBIfam" id="TIGR00510">
    <property type="entry name" value="lipA"/>
    <property type="match status" value="1"/>
</dbReference>
<dbReference type="NCBIfam" id="NF004019">
    <property type="entry name" value="PRK05481.1"/>
    <property type="match status" value="1"/>
</dbReference>
<dbReference type="NCBIfam" id="NF009544">
    <property type="entry name" value="PRK12928.1"/>
    <property type="match status" value="1"/>
</dbReference>
<dbReference type="PANTHER" id="PTHR10949">
    <property type="entry name" value="LIPOYL SYNTHASE"/>
    <property type="match status" value="1"/>
</dbReference>
<dbReference type="PANTHER" id="PTHR10949:SF0">
    <property type="entry name" value="LIPOYL SYNTHASE, MITOCHONDRIAL"/>
    <property type="match status" value="1"/>
</dbReference>
<dbReference type="Pfam" id="PF16881">
    <property type="entry name" value="LIAS_N"/>
    <property type="match status" value="1"/>
</dbReference>
<dbReference type="Pfam" id="PF04055">
    <property type="entry name" value="Radical_SAM"/>
    <property type="match status" value="1"/>
</dbReference>
<dbReference type="PIRSF" id="PIRSF005963">
    <property type="entry name" value="Lipoyl_synth"/>
    <property type="match status" value="1"/>
</dbReference>
<dbReference type="SFLD" id="SFLDF00271">
    <property type="entry name" value="lipoyl_synthase"/>
    <property type="match status" value="1"/>
</dbReference>
<dbReference type="SFLD" id="SFLDG01058">
    <property type="entry name" value="lipoyl_synthase_like"/>
    <property type="match status" value="1"/>
</dbReference>
<dbReference type="SMART" id="SM00729">
    <property type="entry name" value="Elp3"/>
    <property type="match status" value="1"/>
</dbReference>
<dbReference type="SUPFAM" id="SSF102114">
    <property type="entry name" value="Radical SAM enzymes"/>
    <property type="match status" value="1"/>
</dbReference>
<dbReference type="PROSITE" id="PS51918">
    <property type="entry name" value="RADICAL_SAM"/>
    <property type="match status" value="1"/>
</dbReference>
<reference key="1">
    <citation type="journal article" date="2002" name="Proc. Natl. Acad. Sci. U.S.A.">
        <title>Extensive mosaic structure revealed by the complete genome sequence of uropathogenic Escherichia coli.</title>
        <authorList>
            <person name="Welch R.A."/>
            <person name="Burland V."/>
            <person name="Plunkett G. III"/>
            <person name="Redford P."/>
            <person name="Roesch P."/>
            <person name="Rasko D."/>
            <person name="Buckles E.L."/>
            <person name="Liou S.-R."/>
            <person name="Boutin A."/>
            <person name="Hackett J."/>
            <person name="Stroud D."/>
            <person name="Mayhew G.F."/>
            <person name="Rose D.J."/>
            <person name="Zhou S."/>
            <person name="Schwartz D.C."/>
            <person name="Perna N.T."/>
            <person name="Mobley H.L.T."/>
            <person name="Donnenberg M.S."/>
            <person name="Blattner F.R."/>
        </authorList>
    </citation>
    <scope>NUCLEOTIDE SEQUENCE [LARGE SCALE GENOMIC DNA]</scope>
    <source>
        <strain>CFT073 / ATCC 700928 / UPEC</strain>
    </source>
</reference>
<sequence length="321" mass="36072">MSKPIVMERGVKYRDADKMALIPVKNVATEREALLRKPEWMKIKLPADSTRIQGIKAAMRKNGLHSVCEEASCPNLAECFNHGTATFMILGAICTRRCPFCDVAHGRPVAPDANEPVKLAQTIADMALRYVVITSVDRDDLRDGGAQHFADCITAIREKSPQIKIETLVPDFRGRMDRALDILTATPPDVFNHNLENVPRIYRQVRPGADYNWSLKLLERFKEAHPEIPTKSGLMVGLGETNEEIIEVMRDLRRHGVTMLTLGQYLQPSRHHLPVQRYVSPDEFDEMKAEALAMGFTHAACGPFVRSSYHADLQAKGMEVK</sequence>
<protein>
    <recommendedName>
        <fullName evidence="1">Lipoyl synthase</fullName>
        <ecNumber evidence="1">2.8.1.8</ecNumber>
    </recommendedName>
    <alternativeName>
        <fullName evidence="1">Lip-syn</fullName>
        <shortName evidence="1">LS</shortName>
    </alternativeName>
    <alternativeName>
        <fullName evidence="1">Lipoate synthase</fullName>
    </alternativeName>
    <alternativeName>
        <fullName evidence="1">Lipoic acid synthase</fullName>
    </alternativeName>
    <alternativeName>
        <fullName evidence="1">Sulfur insertion protein LipA</fullName>
    </alternativeName>
</protein>